<feature type="chain" id="PRO_0000054639" description="Dihydropteridine reductase">
    <location>
        <begin position="1"/>
        <end position="241"/>
    </location>
</feature>
<feature type="active site" description="Proton acceptor">
    <location>
        <position position="147"/>
    </location>
</feature>
<feature type="binding site">
    <location>
        <begin position="11"/>
        <end position="35"/>
    </location>
    <ligand>
        <name>NADP(+)</name>
        <dbReference type="ChEBI" id="CHEBI:58349"/>
    </ligand>
</feature>
<feature type="modified residue" description="N6-succinyllysine" evidence="1">
    <location>
        <position position="70"/>
    </location>
</feature>
<feature type="modified residue" description="N6-succinyllysine" evidence="1">
    <location>
        <position position="76"/>
    </location>
</feature>
<feature type="modified residue" description="N6-succinyllysine" evidence="1">
    <location>
        <position position="93"/>
    </location>
</feature>
<feature type="modified residue" description="N6-succinyllysine" evidence="1">
    <location>
        <position position="99"/>
    </location>
</feature>
<feature type="modified residue" description="Phosphoserine" evidence="5">
    <location>
        <position position="170"/>
    </location>
</feature>
<feature type="mutagenesis site" description="No significant effect on catalytic efficiency for NADH." evidence="3">
    <original>A</original>
    <variation>V</variation>
    <location>
        <position position="7"/>
    </location>
</feature>
<feature type="mutagenesis site" description="3-fold decrease in catalytic efficiency for NADH." evidence="3">
    <original>D</original>
    <variation>I</variation>
    <location>
        <position position="38"/>
    </location>
</feature>
<feature type="mutagenesis site" description="No significant effect on catalytic efficiency for NADH." evidence="3">
    <original>W</original>
    <variation>F</variation>
    <location>
        <position position="105"/>
    </location>
</feature>
<feature type="strand" evidence="6">
    <location>
        <begin position="9"/>
        <end position="13"/>
    </location>
</feature>
<feature type="turn" evidence="6">
    <location>
        <begin position="14"/>
        <end position="16"/>
    </location>
</feature>
<feature type="helix" evidence="6">
    <location>
        <begin position="18"/>
        <end position="28"/>
    </location>
</feature>
<feature type="turn" evidence="6">
    <location>
        <begin position="29"/>
        <end position="31"/>
    </location>
</feature>
<feature type="strand" evidence="6">
    <location>
        <begin position="33"/>
        <end position="40"/>
    </location>
</feature>
<feature type="strand" evidence="6">
    <location>
        <begin position="45"/>
        <end position="50"/>
    </location>
</feature>
<feature type="helix" evidence="6">
    <location>
        <begin position="57"/>
        <end position="72"/>
    </location>
</feature>
<feature type="strand" evidence="6">
    <location>
        <begin position="77"/>
        <end position="82"/>
    </location>
</feature>
<feature type="helix" evidence="6">
    <location>
        <begin position="97"/>
        <end position="122"/>
    </location>
</feature>
<feature type="strand" evidence="6">
    <location>
        <begin position="123"/>
        <end position="132"/>
    </location>
</feature>
<feature type="helix" evidence="6">
    <location>
        <begin position="135"/>
        <end position="138"/>
    </location>
</feature>
<feature type="helix" evidence="6">
    <location>
        <begin position="145"/>
        <end position="161"/>
    </location>
</feature>
<feature type="strand" evidence="6">
    <location>
        <begin position="173"/>
        <end position="180"/>
    </location>
</feature>
<feature type="helix" evidence="6">
    <location>
        <begin position="185"/>
        <end position="190"/>
    </location>
</feature>
<feature type="helix" evidence="6">
    <location>
        <begin position="196"/>
        <end position="198"/>
    </location>
</feature>
<feature type="strand" evidence="6">
    <location>
        <begin position="199"/>
        <end position="201"/>
    </location>
</feature>
<feature type="helix" evidence="6">
    <location>
        <begin position="202"/>
        <end position="213"/>
    </location>
</feature>
<feature type="turn" evidence="6">
    <location>
        <begin position="214"/>
        <end position="217"/>
    </location>
</feature>
<feature type="strand" evidence="6">
    <location>
        <begin position="224"/>
        <end position="230"/>
    </location>
</feature>
<feature type="strand" evidence="6">
    <location>
        <begin position="233"/>
        <end position="239"/>
    </location>
</feature>
<proteinExistence type="evidence at protein level"/>
<keyword id="KW-0002">3D-structure</keyword>
<keyword id="KW-0903">Direct protein sequencing</keyword>
<keyword id="KW-0521">NADP</keyword>
<keyword id="KW-0560">Oxidoreductase</keyword>
<keyword id="KW-0597">Phosphoprotein</keyword>
<keyword id="KW-1185">Reference proteome</keyword>
<keyword id="KW-0783">Tetrahydrobiopterin biosynthesis</keyword>
<gene>
    <name type="primary">Qdpr</name>
    <name type="synonym">Dhpr</name>
</gene>
<name>DHPR_RAT</name>
<evidence type="ECO:0000250" key="1">
    <source>
        <dbReference type="UniProtKB" id="Q8BVI4"/>
    </source>
</evidence>
<evidence type="ECO:0000269" key="2">
    <source>
    </source>
</evidence>
<evidence type="ECO:0000269" key="3">
    <source>
    </source>
</evidence>
<evidence type="ECO:0000305" key="4"/>
<evidence type="ECO:0007744" key="5">
    <source>
    </source>
</evidence>
<evidence type="ECO:0007829" key="6">
    <source>
        <dbReference type="PDB" id="1DHR"/>
    </source>
</evidence>
<sequence>MAASGEARRVLVYGGRGALGSRCVQAFRARNWWVASIDVVENEEASASVIVKMTDSFTEQADQVTAEVGKLLGDQKVDAILCVAGGWAGGNAKSKSLFKNCDLMWKQSIWTSTISSHLATKHLKEGGLLTLAGAKAALDGTPGMIGYGMAKGAVHQLCQSLAGKNSGMPSGAAAIAVLPVTLDTPMNRKSMPEADFSSWTPLEFLVETFHDWITGNKRPNSGSLIQVVTTDGKTELTPAYF</sequence>
<protein>
    <recommendedName>
        <fullName>Dihydropteridine reductase</fullName>
        <ecNumber evidence="3">1.5.1.34</ecNumber>
    </recommendedName>
    <alternativeName>
        <fullName>HDHPR</fullName>
    </alternativeName>
    <alternativeName>
        <fullName>Quinoid dihydropteridine reductase</fullName>
    </alternativeName>
</protein>
<accession>P11348</accession>
<organism>
    <name type="scientific">Rattus norvegicus</name>
    <name type="common">Rat</name>
    <dbReference type="NCBI Taxonomy" id="10116"/>
    <lineage>
        <taxon>Eukaryota</taxon>
        <taxon>Metazoa</taxon>
        <taxon>Chordata</taxon>
        <taxon>Craniata</taxon>
        <taxon>Vertebrata</taxon>
        <taxon>Euteleostomi</taxon>
        <taxon>Mammalia</taxon>
        <taxon>Eutheria</taxon>
        <taxon>Euarchontoglires</taxon>
        <taxon>Glires</taxon>
        <taxon>Rodentia</taxon>
        <taxon>Myomorpha</taxon>
        <taxon>Muroidea</taxon>
        <taxon>Muridae</taxon>
        <taxon>Murinae</taxon>
        <taxon>Rattus</taxon>
    </lineage>
</organism>
<comment type="function">
    <text evidence="3">Catalyzes the conversion of quinonoid dihydrobiopterin into tetrahydrobiopterin.</text>
</comment>
<comment type="catalytic activity">
    <reaction evidence="3">
        <text>5,6,7,8-tetrahydropteridine + NAD(+) = 6,7-dihydropteridine + NADH + H(+)</text>
        <dbReference type="Rhea" id="RHEA:17869"/>
        <dbReference type="ChEBI" id="CHEBI:15378"/>
        <dbReference type="ChEBI" id="CHEBI:28889"/>
        <dbReference type="ChEBI" id="CHEBI:30156"/>
        <dbReference type="ChEBI" id="CHEBI:57540"/>
        <dbReference type="ChEBI" id="CHEBI:57945"/>
        <dbReference type="EC" id="1.5.1.34"/>
    </reaction>
    <physiologicalReaction direction="right-to-left" evidence="3">
        <dbReference type="Rhea" id="RHEA:17871"/>
    </physiologicalReaction>
</comment>
<comment type="catalytic activity">
    <reaction evidence="3">
        <text>5,6,7,8-tetrahydropteridine + NADP(+) = 6,7-dihydropteridine + NADPH + H(+)</text>
        <dbReference type="Rhea" id="RHEA:17865"/>
        <dbReference type="ChEBI" id="CHEBI:15378"/>
        <dbReference type="ChEBI" id="CHEBI:28889"/>
        <dbReference type="ChEBI" id="CHEBI:30156"/>
        <dbReference type="ChEBI" id="CHEBI:57783"/>
        <dbReference type="ChEBI" id="CHEBI:58349"/>
        <dbReference type="EC" id="1.5.1.34"/>
    </reaction>
    <physiologicalReaction direction="right-to-left" evidence="3">
        <dbReference type="Rhea" id="RHEA:17867"/>
    </physiologicalReaction>
</comment>
<comment type="biophysicochemical properties">
    <kinetics>
        <KM evidence="3">13 uM for NADH</KM>
        <text evidence="3">kcat is 156 sec(-1) for NADH.</text>
    </kinetics>
</comment>
<comment type="subunit">
    <text evidence="2">Homodimer.</text>
</comment>
<comment type="similarity">
    <text evidence="4">Belongs to the short-chain dehydrogenases/reductases (SDR) family.</text>
</comment>
<reference key="1">
    <citation type="journal article" date="1987" name="J. Biol. Chem.">
        <title>Structural studies and isolation of cDNA clones providing the complete sequence of rat liver dihydropteridine reductase.</title>
        <authorList>
            <person name="Shahbaz M."/>
            <person name="Hoch J.A."/>
            <person name="Trach K.A."/>
            <person name="Hural J.A."/>
            <person name="Webber S."/>
            <person name="Whiteley J.M."/>
        </authorList>
    </citation>
    <scope>NUCLEOTIDE SEQUENCE [MRNA]</scope>
    <scope>PARTIAL PROTEIN SEQUENCE</scope>
    <source>
        <tissue>Liver</tissue>
    </source>
</reference>
<reference key="2">
    <citation type="journal article" date="2004" name="Genome Res.">
        <title>The status, quality, and expansion of the NIH full-length cDNA project: the Mammalian Gene Collection (MGC).</title>
        <authorList>
            <consortium name="The MGC Project Team"/>
        </authorList>
    </citation>
    <scope>NUCLEOTIDE SEQUENCE [LARGE SCALE MRNA]</scope>
    <source>
        <tissue>Heart</tissue>
    </source>
</reference>
<reference key="3">
    <citation type="submission" date="2009-01" db="UniProtKB">
        <authorList>
            <person name="Lubec G."/>
            <person name="Chen W.-Q."/>
            <person name="Kang S.U."/>
        </authorList>
    </citation>
    <scope>PROTEIN SEQUENCE OF 10-16; 53-70; 77-93; 100-121; 125-164 AND 218-241</scope>
    <scope>IDENTIFICATION BY MASS SPECTROMETRY</scope>
    <source>
        <strain>Sprague-Dawley</strain>
        <tissue>Brain</tissue>
        <tissue>Hippocampus</tissue>
    </source>
</reference>
<reference key="4">
    <citation type="journal article" date="1987" name="Biochem. Biophys. Res. Commun.">
        <title>Preliminary studies on the primary structure of rat liver dihydropteridine reductase.</title>
        <authorList>
            <person name="Webber S."/>
            <person name="Hural J."/>
            <person name="Whiteley J.M."/>
        </authorList>
    </citation>
    <scope>PROTEIN SEQUENCE OF 13-14; 105-128; 192-220 AND 236-241</scope>
    <source>
        <tissue>Liver</tissue>
    </source>
</reference>
<reference key="5">
    <citation type="journal article" date="1991" name="Arch. Biochem. Biophys.">
        <title>Role of aspartate-37 in determining cofactor specificity and binding in rat liver dihydropteridine reductase.</title>
        <authorList>
            <person name="Matthews D.A."/>
            <person name="Varughese K.I."/>
            <person name="Skinner M.M."/>
            <person name="Xuing N.H."/>
            <person name="Hoch J.A."/>
            <person name="Trach K.A."/>
            <person name="Schneider M."/>
            <person name="Bray T."/>
            <person name="Whiteley J.M."/>
        </authorList>
    </citation>
    <scope>FUNCTION</scope>
    <scope>CATALYTIC ACTIVITY</scope>
    <scope>MUTAGENESIS OF ALA-7; ASP-38 AND TRP-105</scope>
    <scope>BIOPHYSICOCHEMICAL PROPERTIES</scope>
</reference>
<reference key="6">
    <citation type="journal article" date="2012" name="Nat. Commun.">
        <title>Quantitative maps of protein phosphorylation sites across 14 different rat organs and tissues.</title>
        <authorList>
            <person name="Lundby A."/>
            <person name="Secher A."/>
            <person name="Lage K."/>
            <person name="Nordsborg N.B."/>
            <person name="Dmytriyev A."/>
            <person name="Lundby C."/>
            <person name="Olsen J.V."/>
        </authorList>
    </citation>
    <scope>PHOSPHORYLATION [LARGE SCALE ANALYSIS] AT SER-170</scope>
    <scope>IDENTIFICATION BY MASS SPECTROMETRY [LARGE SCALE ANALYSIS]</scope>
</reference>
<reference key="7">
    <citation type="journal article" date="1992" name="Proc. Natl. Acad. Sci. U.S.A.">
        <title>Crystal structure of rat liver dihydropteridine reductase.</title>
        <authorList>
            <person name="Varughese K.I."/>
            <person name="Skinner M.M."/>
            <person name="Whiteley J.M."/>
            <person name="Matthews D.A."/>
            <person name="Xuong N.H."/>
        </authorList>
    </citation>
    <scope>X-RAY CRYSTALLOGRAPHY (2.3 ANGSTROMS)</scope>
    <scope>SUBUNIT</scope>
</reference>
<reference key="8">
    <citation type="journal article" date="1993" name="Adv. Exp. Med. Biol.">
        <title>Two crystal structures of rat liver dihydropteridine reductase.</title>
        <authorList>
            <person name="Varughese K.I."/>
            <person name="Su Y."/>
            <person name="Skinner M.M."/>
            <person name="Xuong N.H."/>
            <person name="Matthews D.A."/>
            <person name="Whiteley J.M."/>
        </authorList>
    </citation>
    <scope>X-RAY CRYSTALLOGRAPHY (2.6 ANGSTROMS) OF 6-241</scope>
</reference>
<dbReference type="EC" id="1.5.1.34" evidence="3"/>
<dbReference type="EMBL" id="J03481">
    <property type="protein sequence ID" value="AAA41099.1"/>
    <property type="molecule type" value="mRNA"/>
</dbReference>
<dbReference type="EMBL" id="BC072536">
    <property type="protein sequence ID" value="AAH72536.1"/>
    <property type="molecule type" value="mRNA"/>
</dbReference>
<dbReference type="PIR" id="A28473">
    <property type="entry name" value="RDRTP"/>
</dbReference>
<dbReference type="RefSeq" id="NP_071785.1">
    <property type="nucleotide sequence ID" value="NM_022390.2"/>
</dbReference>
<dbReference type="PDB" id="1DHR">
    <property type="method" value="X-ray"/>
    <property type="resolution" value="2.30 A"/>
    <property type="chains" value="A=1-241"/>
</dbReference>
<dbReference type="PDB" id="1DIR">
    <property type="method" value="X-ray"/>
    <property type="resolution" value="2.60 A"/>
    <property type="chains" value="A/B/C/D=1-241"/>
</dbReference>
<dbReference type="PDBsum" id="1DHR"/>
<dbReference type="PDBsum" id="1DIR"/>
<dbReference type="SMR" id="P11348"/>
<dbReference type="FunCoup" id="P11348">
    <property type="interactions" value="1597"/>
</dbReference>
<dbReference type="STRING" id="10116.ENSRNOP00000004385"/>
<dbReference type="BindingDB" id="P11348"/>
<dbReference type="ChEMBL" id="CHEMBL2910"/>
<dbReference type="iPTMnet" id="P11348"/>
<dbReference type="PhosphoSitePlus" id="P11348"/>
<dbReference type="jPOST" id="P11348"/>
<dbReference type="PaxDb" id="10116-ENSRNOP00000004385"/>
<dbReference type="GeneID" id="64192"/>
<dbReference type="KEGG" id="rno:64192"/>
<dbReference type="AGR" id="RGD:619915"/>
<dbReference type="CTD" id="5860"/>
<dbReference type="RGD" id="619915">
    <property type="gene designation" value="Qdpr"/>
</dbReference>
<dbReference type="VEuPathDB" id="HostDB:ENSRNOG00000003253"/>
<dbReference type="eggNOG" id="KOG4022">
    <property type="taxonomic scope" value="Eukaryota"/>
</dbReference>
<dbReference type="HOGENOM" id="CLU_010194_22_0_1"/>
<dbReference type="InParanoid" id="P11348"/>
<dbReference type="OrthoDB" id="29605at9989"/>
<dbReference type="PhylomeDB" id="P11348"/>
<dbReference type="TreeFam" id="TF105932"/>
<dbReference type="Reactome" id="R-RNO-8964208">
    <property type="pathway name" value="Phenylalanine metabolism"/>
</dbReference>
<dbReference type="SABIO-RK" id="P11348"/>
<dbReference type="EvolutionaryTrace" id="P11348"/>
<dbReference type="PRO" id="PR:P11348"/>
<dbReference type="Proteomes" id="UP000002494">
    <property type="component" value="Chromosome 14"/>
</dbReference>
<dbReference type="Bgee" id="ENSRNOG00000003253">
    <property type="expression patterns" value="Expressed in Ammon's horn and 19 other cell types or tissues"/>
</dbReference>
<dbReference type="GO" id="GO:0005737">
    <property type="term" value="C:cytoplasm"/>
    <property type="evidence" value="ECO:0000318"/>
    <property type="project" value="GO_Central"/>
</dbReference>
<dbReference type="GO" id="GO:0004155">
    <property type="term" value="F:6,7-dihydropteridine reductase activity"/>
    <property type="evidence" value="ECO:0000314"/>
    <property type="project" value="RGD"/>
</dbReference>
<dbReference type="GO" id="GO:0042802">
    <property type="term" value="F:identical protein binding"/>
    <property type="evidence" value="ECO:0000353"/>
    <property type="project" value="RGD"/>
</dbReference>
<dbReference type="GO" id="GO:0070404">
    <property type="term" value="F:NADH binding"/>
    <property type="evidence" value="ECO:0000353"/>
    <property type="project" value="RGD"/>
</dbReference>
<dbReference type="GO" id="GO:0070402">
    <property type="term" value="F:NADPH binding"/>
    <property type="evidence" value="ECO:0000315"/>
    <property type="project" value="RGD"/>
</dbReference>
<dbReference type="GO" id="GO:0071466">
    <property type="term" value="P:cellular response to xenobiotic stimulus"/>
    <property type="evidence" value="ECO:0000270"/>
    <property type="project" value="RGD"/>
</dbReference>
<dbReference type="GO" id="GO:0006559">
    <property type="term" value="P:L-phenylalanine catabolic process"/>
    <property type="evidence" value="ECO:0000270"/>
    <property type="project" value="RGD"/>
</dbReference>
<dbReference type="GO" id="GO:0001889">
    <property type="term" value="P:liver development"/>
    <property type="evidence" value="ECO:0000270"/>
    <property type="project" value="RGD"/>
</dbReference>
<dbReference type="GO" id="GO:0010044">
    <property type="term" value="P:response to aluminum ion"/>
    <property type="evidence" value="ECO:0000270"/>
    <property type="project" value="RGD"/>
</dbReference>
<dbReference type="GO" id="GO:0033762">
    <property type="term" value="P:response to glucagon"/>
    <property type="evidence" value="ECO:0000270"/>
    <property type="project" value="RGD"/>
</dbReference>
<dbReference type="GO" id="GO:0010288">
    <property type="term" value="P:response to lead ion"/>
    <property type="evidence" value="ECO:0000270"/>
    <property type="project" value="RGD"/>
</dbReference>
<dbReference type="GO" id="GO:0006729">
    <property type="term" value="P:tetrahydrobiopterin biosynthetic process"/>
    <property type="evidence" value="ECO:0000314"/>
    <property type="project" value="RGD"/>
</dbReference>
<dbReference type="CDD" id="cd05334">
    <property type="entry name" value="DHPR_SDR_c_like"/>
    <property type="match status" value="1"/>
</dbReference>
<dbReference type="FunFam" id="3.40.50.720:FF:000157">
    <property type="entry name" value="Quinoid dihydropteridine reductase"/>
    <property type="match status" value="1"/>
</dbReference>
<dbReference type="Gene3D" id="3.40.50.720">
    <property type="entry name" value="NAD(P)-binding Rossmann-like Domain"/>
    <property type="match status" value="1"/>
</dbReference>
<dbReference type="InterPro" id="IPR036291">
    <property type="entry name" value="NAD(P)-bd_dom_sf"/>
</dbReference>
<dbReference type="InterPro" id="IPR020904">
    <property type="entry name" value="Sc_DH/Rdtase_CS"/>
</dbReference>
<dbReference type="InterPro" id="IPR002347">
    <property type="entry name" value="SDR_fam"/>
</dbReference>
<dbReference type="PANTHER" id="PTHR15104">
    <property type="entry name" value="DIHYDROPTERIDINE REDUCTASE"/>
    <property type="match status" value="1"/>
</dbReference>
<dbReference type="PANTHER" id="PTHR15104:SF0">
    <property type="entry name" value="DIHYDROPTERIDINE REDUCTASE"/>
    <property type="match status" value="1"/>
</dbReference>
<dbReference type="Pfam" id="PF00106">
    <property type="entry name" value="adh_short"/>
    <property type="match status" value="1"/>
</dbReference>
<dbReference type="SUPFAM" id="SSF51735">
    <property type="entry name" value="NAD(P)-binding Rossmann-fold domains"/>
    <property type="match status" value="1"/>
</dbReference>
<dbReference type="PROSITE" id="PS00061">
    <property type="entry name" value="ADH_SHORT"/>
    <property type="match status" value="1"/>
</dbReference>